<feature type="signal peptide" evidence="2">
    <location>
        <begin position="1"/>
        <end position="26"/>
    </location>
</feature>
<feature type="chain" id="PRO_0000296252" description="Non-specific lipid-transfer protein 2">
    <location>
        <begin position="27"/>
        <end position="118"/>
    </location>
</feature>
<feature type="disulfide bond" evidence="1">
    <location>
        <begin position="30"/>
        <end position="77"/>
    </location>
</feature>
<feature type="disulfide bond" evidence="1">
    <location>
        <begin position="40"/>
        <end position="54"/>
    </location>
</feature>
<feature type="disulfide bond" evidence="1">
    <location>
        <begin position="55"/>
        <end position="100"/>
    </location>
</feature>
<feature type="disulfide bond" evidence="1">
    <location>
        <begin position="75"/>
        <end position="114"/>
    </location>
</feature>
<feature type="sequence conflict" description="In Ref. 2; AAB70539." evidence="3" ref="2">
    <original>A</original>
    <variation>P</variation>
    <location>
        <position position="44"/>
    </location>
</feature>
<feature type="sequence conflict" description="In Ref. 1; CAA80809." evidence="3" ref="1">
    <original>GSG</original>
    <variation>LR</variation>
    <location>
        <begin position="47"/>
        <end position="49"/>
    </location>
</feature>
<feature type="sequence conflict" description="In Ref. 2; AAB70539." evidence="3" ref="2">
    <original>S</original>
    <variation>N</variation>
    <location>
        <position position="60"/>
    </location>
</feature>
<feature type="sequence conflict" description="In Ref. 3; AAA74624." evidence="3" ref="3">
    <original>S</original>
    <variation>T</variation>
    <location>
        <position position="103"/>
    </location>
</feature>
<feature type="sequence conflict" description="In Ref. 1; CAA80809." evidence="3" ref="1">
    <original>S</original>
    <variation>R</variation>
    <location>
        <position position="116"/>
    </location>
</feature>
<dbReference type="EMBL" id="Z23271">
    <property type="protein sequence ID" value="CAA80809.1"/>
    <property type="molecule type" value="Genomic_DNA"/>
</dbReference>
<dbReference type="EMBL" id="AF017359">
    <property type="protein sequence ID" value="AAB70539.1"/>
    <property type="molecule type" value="mRNA"/>
</dbReference>
<dbReference type="EMBL" id="U31766">
    <property type="protein sequence ID" value="AAA74624.1"/>
    <property type="molecule type" value="mRNA"/>
</dbReference>
<dbReference type="EMBL" id="CM000136">
    <property type="protein sequence ID" value="EAY79714.1"/>
    <property type="molecule type" value="Genomic_DNA"/>
</dbReference>
<dbReference type="EMBL" id="CM000137">
    <property type="protein sequence ID" value="EAY82034.1"/>
    <property type="molecule type" value="Genomic_DNA"/>
</dbReference>
<dbReference type="PIR" id="T02042">
    <property type="entry name" value="T02042"/>
</dbReference>
<dbReference type="PIR" id="T03300">
    <property type="entry name" value="T03300"/>
</dbReference>
<dbReference type="PIR" id="T03782">
    <property type="entry name" value="T03782"/>
</dbReference>
<dbReference type="SMR" id="A2ZAT0"/>
<dbReference type="STRING" id="39946.A2ZAT0"/>
<dbReference type="Allergome" id="2788">
    <property type="allergen name" value="Ory s 14"/>
</dbReference>
<dbReference type="EnsemblPlants" id="BGIOSGA034682-TA">
    <property type="protein sequence ID" value="BGIOSGA034682-PA"/>
    <property type="gene ID" value="BGIOSGA034682"/>
</dbReference>
<dbReference type="EnsemblPlants" id="BGIOSGA036881-TA">
    <property type="protein sequence ID" value="BGIOSGA036881-PA"/>
    <property type="gene ID" value="BGIOSGA036881"/>
</dbReference>
<dbReference type="EnsemblPlants" id="OsGoSa_11g0001090.01">
    <property type="protein sequence ID" value="OsGoSa_11g0001090.01"/>
    <property type="gene ID" value="OsGoSa_11g0001090"/>
</dbReference>
<dbReference type="EnsemblPlants" id="OsIR64_11g0001090.01">
    <property type="protein sequence ID" value="OsIR64_11g0001090.01"/>
    <property type="gene ID" value="OsIR64_11g0001090"/>
</dbReference>
<dbReference type="EnsemblPlants" id="OsKYG_11g0001090.01">
    <property type="protein sequence ID" value="OsKYG_11g0001090.01"/>
    <property type="gene ID" value="OsKYG_11g0001090"/>
</dbReference>
<dbReference type="EnsemblPlants" id="OsLaMu_11g0001120.01">
    <property type="protein sequence ID" value="OsLaMu_11g0001120.01"/>
    <property type="gene ID" value="OsLaMu_11g0001120"/>
</dbReference>
<dbReference type="EnsemblPlants" id="OsLima_11g0000970.01">
    <property type="protein sequence ID" value="OsLima_11g0000970.01"/>
    <property type="gene ID" value="OsLima_11g0000970"/>
</dbReference>
<dbReference type="EnsemblPlants" id="OsLiXu_11g0001090.01">
    <property type="protein sequence ID" value="OsLiXu_11g0001090.01"/>
    <property type="gene ID" value="OsLiXu_11g0001090"/>
</dbReference>
<dbReference type="EnsemblPlants" id="OsMH63_11G001050_03">
    <property type="protein sequence ID" value="OsMH63_11G001050_03"/>
    <property type="gene ID" value="OsMH63_11G001050"/>
</dbReference>
<dbReference type="EnsemblPlants" id="OsMH63_12G001470_02">
    <property type="protein sequence ID" value="OsMH63_12G001470_02"/>
    <property type="gene ID" value="OsMH63_12G001470"/>
</dbReference>
<dbReference type="EnsemblPlants" id="OsMH63_12G001470_03">
    <property type="protein sequence ID" value="OsMH63_12G001470_03"/>
    <property type="gene ID" value="OsMH63_12G001470"/>
</dbReference>
<dbReference type="EnsemblPlants" id="OsPr106_11g0001090.01">
    <property type="protein sequence ID" value="OsPr106_11g0001090.01"/>
    <property type="gene ID" value="OsPr106_11g0001090"/>
</dbReference>
<dbReference type="EnsemblPlants" id="OsZS97_11G001100_01">
    <property type="protein sequence ID" value="OsZS97_11G001100_01"/>
    <property type="gene ID" value="OsZS97_11G001100"/>
</dbReference>
<dbReference type="EnsemblPlants" id="OsZS97_12G001060_02">
    <property type="protein sequence ID" value="OsZS97_12G001060_02"/>
    <property type="gene ID" value="OsZS97_12G001060"/>
</dbReference>
<dbReference type="Gramene" id="BGIOSGA034682-TA">
    <property type="protein sequence ID" value="BGIOSGA034682-PA"/>
    <property type="gene ID" value="BGIOSGA034682"/>
</dbReference>
<dbReference type="Gramene" id="BGIOSGA036881-TA">
    <property type="protein sequence ID" value="BGIOSGA036881-PA"/>
    <property type="gene ID" value="BGIOSGA036881"/>
</dbReference>
<dbReference type="Gramene" id="OsGoSa_11g0001090.01">
    <property type="protein sequence ID" value="OsGoSa_11g0001090.01"/>
    <property type="gene ID" value="OsGoSa_11g0001090"/>
</dbReference>
<dbReference type="Gramene" id="OsIR64_11g0001090.01">
    <property type="protein sequence ID" value="OsIR64_11g0001090.01"/>
    <property type="gene ID" value="OsIR64_11g0001090"/>
</dbReference>
<dbReference type="Gramene" id="OsKYG_11g0001090.01">
    <property type="protein sequence ID" value="OsKYG_11g0001090.01"/>
    <property type="gene ID" value="OsKYG_11g0001090"/>
</dbReference>
<dbReference type="Gramene" id="OsLaMu_11g0001120.01">
    <property type="protein sequence ID" value="OsLaMu_11g0001120.01"/>
    <property type="gene ID" value="OsLaMu_11g0001120"/>
</dbReference>
<dbReference type="Gramene" id="OsLima_11g0000970.01">
    <property type="protein sequence ID" value="OsLima_11g0000970.01"/>
    <property type="gene ID" value="OsLima_11g0000970"/>
</dbReference>
<dbReference type="Gramene" id="OsLiXu_11g0001090.01">
    <property type="protein sequence ID" value="OsLiXu_11g0001090.01"/>
    <property type="gene ID" value="OsLiXu_11g0001090"/>
</dbReference>
<dbReference type="Gramene" id="OsMH63_11G001050_03">
    <property type="protein sequence ID" value="OsMH63_11G001050_03"/>
    <property type="gene ID" value="OsMH63_11G001050"/>
</dbReference>
<dbReference type="Gramene" id="OsMH63_12G001470_02">
    <property type="protein sequence ID" value="OsMH63_12G001470_02"/>
    <property type="gene ID" value="OsMH63_12G001470"/>
</dbReference>
<dbReference type="Gramene" id="OsMH63_12G001470_03">
    <property type="protein sequence ID" value="OsMH63_12G001470_03"/>
    <property type="gene ID" value="OsMH63_12G001470"/>
</dbReference>
<dbReference type="Gramene" id="OsPr106_11g0001090.01">
    <property type="protein sequence ID" value="OsPr106_11g0001090.01"/>
    <property type="gene ID" value="OsPr106_11g0001090"/>
</dbReference>
<dbReference type="Gramene" id="OsZS97_11G001100_01">
    <property type="protein sequence ID" value="OsZS97_11G001100_01"/>
    <property type="gene ID" value="OsZS97_11G001100"/>
</dbReference>
<dbReference type="Gramene" id="OsZS97_12G001060_02">
    <property type="protein sequence ID" value="OsZS97_12G001060_02"/>
    <property type="gene ID" value="OsZS97_12G001060"/>
</dbReference>
<dbReference type="HOGENOM" id="CLU_128423_0_0_1"/>
<dbReference type="OMA" id="CLIFACM"/>
<dbReference type="OrthoDB" id="770678at2759"/>
<dbReference type="Proteomes" id="UP000007015">
    <property type="component" value="Chromosome 11"/>
</dbReference>
<dbReference type="Proteomes" id="UP000007015">
    <property type="component" value="Chromosome 12"/>
</dbReference>
<dbReference type="GO" id="GO:0008289">
    <property type="term" value="F:lipid binding"/>
    <property type="evidence" value="ECO:0007669"/>
    <property type="project" value="UniProtKB-KW"/>
</dbReference>
<dbReference type="GO" id="GO:0006869">
    <property type="term" value="P:lipid transport"/>
    <property type="evidence" value="ECO:0007669"/>
    <property type="project" value="InterPro"/>
</dbReference>
<dbReference type="CDD" id="cd01960">
    <property type="entry name" value="nsLTP1"/>
    <property type="match status" value="1"/>
</dbReference>
<dbReference type="Gene3D" id="1.10.110.10">
    <property type="entry name" value="Plant lipid-transfer and hydrophobic proteins"/>
    <property type="match status" value="1"/>
</dbReference>
<dbReference type="InterPro" id="IPR036312">
    <property type="entry name" value="Bifun_inhib/LTP/seed_sf"/>
</dbReference>
<dbReference type="InterPro" id="IPR016140">
    <property type="entry name" value="Bifunc_inhib/LTP/seed_store"/>
</dbReference>
<dbReference type="InterPro" id="IPR000528">
    <property type="entry name" value="Plant_nsLTP"/>
</dbReference>
<dbReference type="PANTHER" id="PTHR33076">
    <property type="entry name" value="NON-SPECIFIC LIPID-TRANSFER PROTEIN 2-RELATED"/>
    <property type="match status" value="1"/>
</dbReference>
<dbReference type="Pfam" id="PF00234">
    <property type="entry name" value="Tryp_alpha_amyl"/>
    <property type="match status" value="1"/>
</dbReference>
<dbReference type="PRINTS" id="PR00382">
    <property type="entry name" value="LIPIDTRNSFER"/>
</dbReference>
<dbReference type="SMART" id="SM00499">
    <property type="entry name" value="AAI"/>
    <property type="match status" value="1"/>
</dbReference>
<dbReference type="SUPFAM" id="SSF47699">
    <property type="entry name" value="Bifunctional inhibitor/lipid-transfer protein/seed storage 2S albumin"/>
    <property type="match status" value="1"/>
</dbReference>
<dbReference type="PROSITE" id="PS00597">
    <property type="entry name" value="PLANT_LTP"/>
    <property type="match status" value="1"/>
</dbReference>
<organism>
    <name type="scientific">Oryza sativa subsp. indica</name>
    <name type="common">Rice</name>
    <dbReference type="NCBI Taxonomy" id="39946"/>
    <lineage>
        <taxon>Eukaryota</taxon>
        <taxon>Viridiplantae</taxon>
        <taxon>Streptophyta</taxon>
        <taxon>Embryophyta</taxon>
        <taxon>Tracheophyta</taxon>
        <taxon>Spermatophyta</taxon>
        <taxon>Magnoliopsida</taxon>
        <taxon>Liliopsida</taxon>
        <taxon>Poales</taxon>
        <taxon>Poaceae</taxon>
        <taxon>BOP clade</taxon>
        <taxon>Oryzoideae</taxon>
        <taxon>Oryzeae</taxon>
        <taxon>Oryzinae</taxon>
        <taxon>Oryza</taxon>
        <taxon>Oryza sativa</taxon>
    </lineage>
</organism>
<protein>
    <recommendedName>
        <fullName>Non-specific lipid-transfer protein 2</fullName>
        <shortName>LTP 2</shortName>
    </recommendedName>
</protein>
<keyword id="KW-1015">Disulfide bond</keyword>
<keyword id="KW-0446">Lipid-binding</keyword>
<keyword id="KW-1185">Reference proteome</keyword>
<keyword id="KW-0732">Signal</keyword>
<keyword id="KW-0813">Transport</keyword>
<evidence type="ECO:0000250" key="1"/>
<evidence type="ECO:0000255" key="2"/>
<evidence type="ECO:0000305" key="3"/>
<proteinExistence type="inferred from homology"/>
<comment type="function">
    <text>Plant non-specific lipid-transfer proteins transfer phospholipids as well as galactolipids across membranes. May play a role in wax or cutin deposition in the cell walls of expanding epidermal cells and certain secretory tissues.</text>
</comment>
<comment type="similarity">
    <text evidence="3">Belongs to the plant LTP family.</text>
</comment>
<gene>
    <name type="primary">LTP2-A</name>
    <name type="ORF">OsI_033673</name>
</gene>
<gene>
    <name type="primary">LTP2-B</name>
    <name type="ORF">OsI_035993</name>
</gene>
<name>NLTP2_ORYSI</name>
<reference key="1">
    <citation type="journal article" date="1994" name="Gene">
        <title>Characterization of a rice gene coding for a lipid transfer protein.</title>
        <authorList>
            <person name="Vignols F."/>
            <person name="Lund G."/>
            <person name="Phami S."/>
            <person name="Tremousaygue D."/>
            <person name="Grellet F."/>
            <person name="Kader J.-C."/>
            <person name="Puidomenech P."/>
            <person name="Delseny M."/>
        </authorList>
    </citation>
    <scope>NUCLEOTIDE SEQUENCE [GENOMIC DNA]</scope>
    <source>
        <strain>cv. IR36</strain>
    </source>
</reference>
<reference key="2">
    <citation type="online journal article" date="1999" name="Plant Gene Register">
        <title>Cloning and sequence analysis of cDNAs encoding lipid-transfer proteins from Oryza sativa L.</title>
        <authorList>
            <person name="Lee M.C."/>
            <person name="Kim Y.H."/>
            <person name="Yun D.W."/>
            <person name="Ma B.C."/>
            <person name="Nahm B.H."/>
            <person name="Eun M.Y."/>
        </authorList>
        <locator>PGR99-061</locator>
    </citation>
    <scope>NUCLEOTIDE SEQUENCE [MRNA]</scope>
    <source>
        <strain>cv. Milyang 23</strain>
    </source>
</reference>
<reference key="3">
    <citation type="thesis" date="1995" institute="Fudan University" country="China">
        <title>Rice lipid transfer protein gene.</title>
        <authorList>
            <person name="Zhan S."/>
        </authorList>
    </citation>
    <scope>NUCLEOTIDE SEQUENCE [MRNA]</scope>
    <source>
        <strain>cv. Guang-Lu-Ai No.4</strain>
        <tissue>Shoot</tissue>
    </source>
</reference>
<reference key="4">
    <citation type="journal article" date="2005" name="PLoS Biol.">
        <title>The genomes of Oryza sativa: a history of duplications.</title>
        <authorList>
            <person name="Yu J."/>
            <person name="Wang J."/>
            <person name="Lin W."/>
            <person name="Li S."/>
            <person name="Li H."/>
            <person name="Zhou J."/>
            <person name="Ni P."/>
            <person name="Dong W."/>
            <person name="Hu S."/>
            <person name="Zeng C."/>
            <person name="Zhang J."/>
            <person name="Zhang Y."/>
            <person name="Li R."/>
            <person name="Xu Z."/>
            <person name="Li S."/>
            <person name="Li X."/>
            <person name="Zheng H."/>
            <person name="Cong L."/>
            <person name="Lin L."/>
            <person name="Yin J."/>
            <person name="Geng J."/>
            <person name="Li G."/>
            <person name="Shi J."/>
            <person name="Liu J."/>
            <person name="Lv H."/>
            <person name="Li J."/>
            <person name="Wang J."/>
            <person name="Deng Y."/>
            <person name="Ran L."/>
            <person name="Shi X."/>
            <person name="Wang X."/>
            <person name="Wu Q."/>
            <person name="Li C."/>
            <person name="Ren X."/>
            <person name="Wang J."/>
            <person name="Wang X."/>
            <person name="Li D."/>
            <person name="Liu D."/>
            <person name="Zhang X."/>
            <person name="Ji Z."/>
            <person name="Zhao W."/>
            <person name="Sun Y."/>
            <person name="Zhang Z."/>
            <person name="Bao J."/>
            <person name="Han Y."/>
            <person name="Dong L."/>
            <person name="Ji J."/>
            <person name="Chen P."/>
            <person name="Wu S."/>
            <person name="Liu J."/>
            <person name="Xiao Y."/>
            <person name="Bu D."/>
            <person name="Tan J."/>
            <person name="Yang L."/>
            <person name="Ye C."/>
            <person name="Zhang J."/>
            <person name="Xu J."/>
            <person name="Zhou Y."/>
            <person name="Yu Y."/>
            <person name="Zhang B."/>
            <person name="Zhuang S."/>
            <person name="Wei H."/>
            <person name="Liu B."/>
            <person name="Lei M."/>
            <person name="Yu H."/>
            <person name="Li Y."/>
            <person name="Xu H."/>
            <person name="Wei S."/>
            <person name="He X."/>
            <person name="Fang L."/>
            <person name="Zhang Z."/>
            <person name="Zhang Y."/>
            <person name="Huang X."/>
            <person name="Su Z."/>
            <person name="Tong W."/>
            <person name="Li J."/>
            <person name="Tong Z."/>
            <person name="Li S."/>
            <person name="Ye J."/>
            <person name="Wang L."/>
            <person name="Fang L."/>
            <person name="Lei T."/>
            <person name="Chen C.-S."/>
            <person name="Chen H.-C."/>
            <person name="Xu Z."/>
            <person name="Li H."/>
            <person name="Huang H."/>
            <person name="Zhang F."/>
            <person name="Xu H."/>
            <person name="Li N."/>
            <person name="Zhao C."/>
            <person name="Li S."/>
            <person name="Dong L."/>
            <person name="Huang Y."/>
            <person name="Li L."/>
            <person name="Xi Y."/>
            <person name="Qi Q."/>
            <person name="Li W."/>
            <person name="Zhang B."/>
            <person name="Hu W."/>
            <person name="Zhang Y."/>
            <person name="Tian X."/>
            <person name="Jiao Y."/>
            <person name="Liang X."/>
            <person name="Jin J."/>
            <person name="Gao L."/>
            <person name="Zheng W."/>
            <person name="Hao B."/>
            <person name="Liu S.-M."/>
            <person name="Wang W."/>
            <person name="Yuan L."/>
            <person name="Cao M."/>
            <person name="McDermott J."/>
            <person name="Samudrala R."/>
            <person name="Wang J."/>
            <person name="Wong G.K.-S."/>
            <person name="Yang H."/>
        </authorList>
    </citation>
    <scope>NUCLEOTIDE SEQUENCE [LARGE SCALE GENOMIC DNA]</scope>
    <source>
        <strain>cv. 93-11</strain>
    </source>
</reference>
<accession>A2ZAT0</accession>
<accession>O22483</accession>
<accession>Q2RBD4</accession>
<accession>Q42978</accession>
<accession>Q42999</accession>
<sequence>MARAQLVLVALVAAALLLAGPHTTMAAISCGQVNSAVSPCLSYARGGSGPSAACCSGVRSLNSAASTTADRRTACNCLKNVAGSISGLNAGNAASIPSKCGVSIPYTISPSIDCSSVN</sequence>